<comment type="function">
    <text evidence="1 3 4 5">Calcium channel that probably plays a role in the regulation of calcium homeostasis (PubMed:30930064, PubMed:33208533, PubMed:36948481). Uptakes calcium ions and mediates calcium flux in proteoliposomes in a pH-dependent manner (PubMed:24904158, PubMed:30930064). When expressed in E.coli in the presence of high extracellular calcium concentrations, shows calcium-leak activity, increasing intracellular calcium concentration (PubMed:24904158). It can also mediate Ca(2+) flux from the endoplamic reticulum (ER) when expressed in permeabilized mammalian cells (PubMed:30930064). Calcium transport activity is also detected in ER-like lipid vesicles (PubMed:36948481).</text>
</comment>
<comment type="catalytic activity">
    <reaction evidence="10 11 13">
        <text>Ca(2+)(in) = Ca(2+)(out)</text>
        <dbReference type="Rhea" id="RHEA:29671"/>
        <dbReference type="ChEBI" id="CHEBI:29108"/>
    </reaction>
</comment>
<comment type="activity regulation">
    <text evidence="1 3 4">The calcium-release activity is mediated by two factors: pH and transmembrane ion gradient (PubMed:33208533). It was proposed, based on an MD simulation, that the conserved aspartyl dyad (Asp-171-Asp-195) regulates Ca(2+) binding, pH sensing, and the channel pore opening and closing, and that protonation of Asp-171 probably weakens its interaction with Arg-60, facilitating the opening of the channel (PubMed:30930064). Another study using nanodiscs suggests that Asp-171 is not a pH sensor regulating the pore dynamics; instead, it is only involved in the gating of calcium ions (PubMed:33208533). When crystallized in detergents at different pH conditions, the transition between open and closed conformations is regulated by pH (PubMed:24904158). Ca(2+) binding is inhibited by Na(+), K(+), Li(+), Yb(3+) and Lu(3+), but not by Mg(2+) and Mn(2+) (PubMed:30930064).</text>
</comment>
<comment type="subunit">
    <text evidence="1 2">Monomer.</text>
</comment>
<comment type="subcellular location">
    <subcellularLocation>
        <location evidence="9">Cell membrane</location>
        <topology evidence="1 3 4">Multi-pass membrane protein</topology>
    </subcellularLocation>
</comment>
<comment type="domain">
    <text evidence="1 4 5">BsYetJ in nanodiscs is structurally different from those crystallized in detergents (PubMed:33208533). In lipid nanodiscs, BsYetJ conformation is pH-sensitive in apo state (lacking calcium), whereas in a calcium-containing solution it is locked in an intermediate state, inert to pH changes (PubMed:33208533). When crystallized in detergents it shows a pH-sensitive conformational equilibrium between a rather flexible pore-open state seen at lower pH and a pore-closed state seen at higher pH (PubMed:24904158). BsYetJ appears to be a lipid-sensitive membrane protein: differences in membrane lipid composition lead to changes in functional sites (PubMed:36948481).</text>
</comment>
<comment type="similarity">
    <text evidence="9">Belongs to the BI1 family.</text>
</comment>
<name>CALJ_BACSU</name>
<evidence type="ECO:0000269" key="1">
    <source>
    </source>
</evidence>
<evidence type="ECO:0000269" key="2">
    <source>
    </source>
</evidence>
<evidence type="ECO:0000269" key="3">
    <source>
    </source>
</evidence>
<evidence type="ECO:0000269" key="4">
    <source>
    </source>
</evidence>
<evidence type="ECO:0000269" key="5">
    <source>
    </source>
</evidence>
<evidence type="ECO:0000303" key="6">
    <source>
    </source>
</evidence>
<evidence type="ECO:0000303" key="7">
    <source>
    </source>
</evidence>
<evidence type="ECO:0000303" key="8">
    <source>
    </source>
</evidence>
<evidence type="ECO:0000305" key="9"/>
<evidence type="ECO:0000305" key="10">
    <source>
    </source>
</evidence>
<evidence type="ECO:0000305" key="11">
    <source>
    </source>
</evidence>
<evidence type="ECO:0000305" key="12">
    <source>
    </source>
</evidence>
<evidence type="ECO:0000305" key="13">
    <source>
    </source>
</evidence>
<evidence type="ECO:0000312" key="14">
    <source>
        <dbReference type="EMBL" id="CAB12539.1"/>
    </source>
</evidence>
<evidence type="ECO:0007744" key="15">
    <source>
        <dbReference type="PDB" id="4PGR"/>
    </source>
</evidence>
<evidence type="ECO:0007744" key="16">
    <source>
        <dbReference type="PDB" id="4PGS"/>
    </source>
</evidence>
<evidence type="ECO:0007744" key="17">
    <source>
        <dbReference type="PDB" id="4PGU"/>
    </source>
</evidence>
<evidence type="ECO:0007744" key="18">
    <source>
        <dbReference type="PDB" id="4PGV"/>
    </source>
</evidence>
<evidence type="ECO:0007744" key="19">
    <source>
        <dbReference type="PDB" id="4PGW"/>
    </source>
</evidence>
<evidence type="ECO:0007744" key="20">
    <source>
        <dbReference type="PDB" id="4TKQ"/>
    </source>
</evidence>
<evidence type="ECO:0007744" key="21">
    <source>
        <dbReference type="PDB" id="6NQ7"/>
    </source>
</evidence>
<evidence type="ECO:0007744" key="22">
    <source>
        <dbReference type="PDB" id="6NQ8"/>
    </source>
</evidence>
<evidence type="ECO:0007744" key="23">
    <source>
        <dbReference type="PDB" id="6NQ9"/>
    </source>
</evidence>
<evidence type="ECO:0007829" key="24">
    <source>
        <dbReference type="PDB" id="4PGR"/>
    </source>
</evidence>
<keyword id="KW-0002">3D-structure</keyword>
<keyword id="KW-0106">Calcium</keyword>
<keyword id="KW-0109">Calcium transport</keyword>
<keyword id="KW-1003">Cell membrane</keyword>
<keyword id="KW-0406">Ion transport</keyword>
<keyword id="KW-0472">Membrane</keyword>
<keyword id="KW-1185">Reference proteome</keyword>
<keyword id="KW-0812">Transmembrane</keyword>
<keyword id="KW-1133">Transmembrane helix</keyword>
<keyword id="KW-0813">Transport</keyword>
<gene>
    <name evidence="14" type="primary">calJ</name>
    <name evidence="8" type="synonym">yetJ</name>
    <name evidence="14" type="ordered locus">BSU07200</name>
</gene>
<feature type="chain" id="PRO_0000360560" description="pH-sensitive calcium channel">
    <location>
        <begin position="1"/>
        <end position="214"/>
    </location>
</feature>
<feature type="topological domain" description="Cytoplasmic" evidence="15 17 18 20 21">
    <location>
        <begin position="1"/>
        <end position="15"/>
    </location>
</feature>
<feature type="transmembrane region" description="Helical" evidence="15 17 18 20 21">
    <location>
        <begin position="16"/>
        <end position="37"/>
    </location>
</feature>
<feature type="topological domain" description="Extracellular" evidence="15 17 18 20 21">
    <location>
        <begin position="38"/>
        <end position="44"/>
    </location>
</feature>
<feature type="transmembrane region" description="Helical" evidence="15 17 18 20 21">
    <location>
        <begin position="45"/>
        <end position="59"/>
    </location>
</feature>
<feature type="topological domain" description="Cytoplasmic" evidence="15 17 18 20 21">
    <location>
        <begin position="60"/>
        <end position="66"/>
    </location>
</feature>
<feature type="transmembrane region" description="Helical" evidence="15 17 18 20 21">
    <location>
        <begin position="67"/>
        <end position="86"/>
    </location>
</feature>
<feature type="topological domain" description="Extracellular" evidence="15 17 18 20 21">
    <location>
        <begin position="87"/>
        <end position="95"/>
    </location>
</feature>
<feature type="transmembrane region" description="Helical" evidence="15 17 18 20 21">
    <location>
        <begin position="96"/>
        <end position="117"/>
    </location>
</feature>
<feature type="topological domain" description="Cytoplasmic" evidence="15 17 18 20 21">
    <location>
        <begin position="118"/>
        <end position="122"/>
    </location>
</feature>
<feature type="transmembrane region" description="Helical" evidence="15 17 18 20 21">
    <location>
        <begin position="123"/>
        <end position="146"/>
    </location>
</feature>
<feature type="topological domain" description="Extracellular" evidence="15 17 18 20 21">
    <location>
        <begin position="147"/>
        <end position="151"/>
    </location>
</feature>
<feature type="transmembrane region" description="Helical" evidence="15 17 18 20 21">
    <location>
        <begin position="152"/>
        <end position="175"/>
    </location>
</feature>
<feature type="topological domain" description="Cytoplasmic" evidence="15 17 18 20 21">
    <location>
        <begin position="176"/>
        <end position="185"/>
    </location>
</feature>
<feature type="transmembrane region" description="Helical" evidence="15 17 18 20 21">
    <location>
        <begin position="186"/>
        <end position="207"/>
    </location>
</feature>
<feature type="topological domain" description="Extracellular" evidence="15 17 18 20 21">
    <location>
        <begin position="208"/>
        <end position="214"/>
    </location>
</feature>
<feature type="site" description="Important for activity" evidence="11 12">
    <location>
        <position position="171"/>
    </location>
</feature>
<feature type="mutagenesis site" description="Causes a large disruption to the gating mechanism and thus allows a large amount of Ca(2+) influx in a ER-like lipid environment." evidence="5">
    <original>E</original>
    <variation>Q</variation>
    <location>
        <position position="49"/>
    </location>
</feature>
<feature type="mutagenesis site" description="Results in constantly open channel with reduced Ca(2+) affinity." evidence="3">
    <original>D</original>
    <variation>E</variation>
    <location>
        <position position="171"/>
    </location>
</feature>
<feature type="mutagenesis site" description="Mimics the protonation state and can nearly shut down the calcium flux." evidence="4">
    <original>D</original>
    <variation>N</variation>
    <location>
        <position position="171"/>
    </location>
</feature>
<feature type="mutagenesis site" description="Results in constantly open channel with reduced Ca(2+) affinity." evidence="3">
    <original>D</original>
    <variation>E</variation>
    <location>
        <position position="195"/>
    </location>
</feature>
<feature type="helix" evidence="24">
    <location>
        <begin position="9"/>
        <end position="34"/>
    </location>
</feature>
<feature type="helix" evidence="24">
    <location>
        <begin position="39"/>
        <end position="41"/>
    </location>
</feature>
<feature type="helix" evidence="24">
    <location>
        <begin position="45"/>
        <end position="58"/>
    </location>
</feature>
<feature type="helix" evidence="24">
    <location>
        <begin position="67"/>
        <end position="80"/>
    </location>
</feature>
<feature type="helix" evidence="24">
    <location>
        <begin position="82"/>
        <end position="92"/>
    </location>
</feature>
<feature type="helix" evidence="24">
    <location>
        <begin position="95"/>
        <end position="117"/>
    </location>
</feature>
<feature type="helix" evidence="24">
    <location>
        <begin position="123"/>
        <end position="125"/>
    </location>
</feature>
<feature type="helix" evidence="24">
    <location>
        <begin position="126"/>
        <end position="145"/>
    </location>
</feature>
<feature type="helix" evidence="24">
    <location>
        <begin position="150"/>
        <end position="177"/>
    </location>
</feature>
<feature type="helix" evidence="24">
    <location>
        <begin position="182"/>
        <end position="184"/>
    </location>
</feature>
<feature type="helix" evidence="24">
    <location>
        <begin position="185"/>
        <end position="210"/>
    </location>
</feature>
<dbReference type="EMBL" id="AL009126">
    <property type="protein sequence ID" value="CAB12539.1"/>
    <property type="molecule type" value="Genomic_DNA"/>
</dbReference>
<dbReference type="PIR" id="G69798">
    <property type="entry name" value="G69798"/>
</dbReference>
<dbReference type="RefSeq" id="WP_003244397.1">
    <property type="nucleotide sequence ID" value="NZ_OZ025638.1"/>
</dbReference>
<dbReference type="PDB" id="4PGR">
    <property type="method" value="X-ray"/>
    <property type="resolution" value="1.95 A"/>
    <property type="chains" value="A=1-214"/>
</dbReference>
<dbReference type="PDB" id="4PGS">
    <property type="method" value="X-ray"/>
    <property type="resolution" value="2.50 A"/>
    <property type="chains" value="A=1-214"/>
</dbReference>
<dbReference type="PDB" id="4PGU">
    <property type="method" value="X-ray"/>
    <property type="resolution" value="3.40 A"/>
    <property type="chains" value="A=1-214"/>
</dbReference>
<dbReference type="PDB" id="4PGV">
    <property type="method" value="X-ray"/>
    <property type="resolution" value="2.61 A"/>
    <property type="chains" value="A=1-214"/>
</dbReference>
<dbReference type="PDB" id="4PGW">
    <property type="method" value="X-ray"/>
    <property type="resolution" value="3.60 A"/>
    <property type="chains" value="A=6-214"/>
</dbReference>
<dbReference type="PDB" id="4TKQ">
    <property type="method" value="X-ray"/>
    <property type="resolution" value="2.80 A"/>
    <property type="chains" value="A=1-214"/>
</dbReference>
<dbReference type="PDB" id="6NQ7">
    <property type="method" value="X-ray"/>
    <property type="resolution" value="2.50 A"/>
    <property type="chains" value="A=6-214"/>
</dbReference>
<dbReference type="PDB" id="6NQ8">
    <property type="method" value="X-ray"/>
    <property type="resolution" value="3.10 A"/>
    <property type="chains" value="A/B/C/D=1-214"/>
</dbReference>
<dbReference type="PDB" id="6NQ9">
    <property type="method" value="X-ray"/>
    <property type="resolution" value="3.10 A"/>
    <property type="chains" value="A/B/C/D=1-214"/>
</dbReference>
<dbReference type="PDBsum" id="4PGR"/>
<dbReference type="PDBsum" id="4PGS"/>
<dbReference type="PDBsum" id="4PGU"/>
<dbReference type="PDBsum" id="4PGV"/>
<dbReference type="PDBsum" id="4PGW"/>
<dbReference type="PDBsum" id="4TKQ"/>
<dbReference type="PDBsum" id="6NQ7"/>
<dbReference type="PDBsum" id="6NQ8"/>
<dbReference type="PDBsum" id="6NQ9"/>
<dbReference type="SMR" id="O31539"/>
<dbReference type="FunCoup" id="O31539">
    <property type="interactions" value="405"/>
</dbReference>
<dbReference type="STRING" id="224308.BSU07200"/>
<dbReference type="TCDB" id="1.A.14.2.3">
    <property type="family name" value="the calcium transporter a (cata) family (formerly the testis-enhanced gene transfer (tegt) family)"/>
</dbReference>
<dbReference type="PaxDb" id="224308-BSU07200"/>
<dbReference type="EnsemblBacteria" id="CAB12539">
    <property type="protein sequence ID" value="CAB12539"/>
    <property type="gene ID" value="BSU_07200"/>
</dbReference>
<dbReference type="GeneID" id="938782"/>
<dbReference type="KEGG" id="bsu:BSU07200"/>
<dbReference type="PATRIC" id="fig|224308.179.peg.781"/>
<dbReference type="eggNOG" id="COG0670">
    <property type="taxonomic scope" value="Bacteria"/>
</dbReference>
<dbReference type="InParanoid" id="O31539"/>
<dbReference type="OrthoDB" id="9793828at2"/>
<dbReference type="PhylomeDB" id="O31539"/>
<dbReference type="BioCyc" id="BSUB:BSU07200-MONOMER"/>
<dbReference type="EvolutionaryTrace" id="O31539"/>
<dbReference type="Proteomes" id="UP000001570">
    <property type="component" value="Chromosome"/>
</dbReference>
<dbReference type="GO" id="GO:0016020">
    <property type="term" value="C:membrane"/>
    <property type="evidence" value="ECO:0000314"/>
    <property type="project" value="FlyBase"/>
</dbReference>
<dbReference type="GO" id="GO:0005886">
    <property type="term" value="C:plasma membrane"/>
    <property type="evidence" value="ECO:0000318"/>
    <property type="project" value="GO_Central"/>
</dbReference>
<dbReference type="GO" id="GO:0005262">
    <property type="term" value="F:calcium channel activity"/>
    <property type="evidence" value="ECO:0000314"/>
    <property type="project" value="FlyBase"/>
</dbReference>
<dbReference type="GO" id="GO:0006816">
    <property type="term" value="P:calcium ion transport"/>
    <property type="evidence" value="ECO:0000314"/>
    <property type="project" value="FlyBase"/>
</dbReference>
<dbReference type="GO" id="GO:0030162">
    <property type="term" value="P:regulation of proteolysis"/>
    <property type="evidence" value="ECO:0000318"/>
    <property type="project" value="GO_Central"/>
</dbReference>
<dbReference type="CDD" id="cd10432">
    <property type="entry name" value="BI-1-like_bacterial"/>
    <property type="match status" value="1"/>
</dbReference>
<dbReference type="InterPro" id="IPR006214">
    <property type="entry name" value="Bax_inhibitor_1-related"/>
</dbReference>
<dbReference type="PANTHER" id="PTHR23291">
    <property type="entry name" value="BAX INHIBITOR-RELATED"/>
    <property type="match status" value="1"/>
</dbReference>
<dbReference type="PANTHER" id="PTHR23291:SF50">
    <property type="entry name" value="PROTEIN LIFEGUARD 4"/>
    <property type="match status" value="1"/>
</dbReference>
<dbReference type="Pfam" id="PF01027">
    <property type="entry name" value="Bax1-I"/>
    <property type="match status" value="1"/>
</dbReference>
<sequence length="214" mass="23829">MQATVHESKQSIMQRILTVFVFTLLIATVGLFIGQFVPVALMLPLSILEVAMIILAFWMRRRKAVGYAFVYTFAFVSGITLFPIVSHYASIAGAYVVLEAFGSTFVIFAVLGTIGAKMKKDLSFLWSFLLVAVLALAVVGIFNIFSPLNSAAMMAYSVIGTIVFSLYILYDLNQIKHRHITEDLIPVMALSLYLDFINLFINLLRFFGILSSDD</sequence>
<proteinExistence type="evidence at protein level"/>
<reference key="1">
    <citation type="journal article" date="1997" name="Nature">
        <title>The complete genome sequence of the Gram-positive bacterium Bacillus subtilis.</title>
        <authorList>
            <person name="Kunst F."/>
            <person name="Ogasawara N."/>
            <person name="Moszer I."/>
            <person name="Albertini A.M."/>
            <person name="Alloni G."/>
            <person name="Azevedo V."/>
            <person name="Bertero M.G."/>
            <person name="Bessieres P."/>
            <person name="Bolotin A."/>
            <person name="Borchert S."/>
            <person name="Borriss R."/>
            <person name="Boursier L."/>
            <person name="Brans A."/>
            <person name="Braun M."/>
            <person name="Brignell S.C."/>
            <person name="Bron S."/>
            <person name="Brouillet S."/>
            <person name="Bruschi C.V."/>
            <person name="Caldwell B."/>
            <person name="Capuano V."/>
            <person name="Carter N.M."/>
            <person name="Choi S.-K."/>
            <person name="Codani J.-J."/>
            <person name="Connerton I.F."/>
            <person name="Cummings N.J."/>
            <person name="Daniel R.A."/>
            <person name="Denizot F."/>
            <person name="Devine K.M."/>
            <person name="Duesterhoeft A."/>
            <person name="Ehrlich S.D."/>
            <person name="Emmerson P.T."/>
            <person name="Entian K.-D."/>
            <person name="Errington J."/>
            <person name="Fabret C."/>
            <person name="Ferrari E."/>
            <person name="Foulger D."/>
            <person name="Fritz C."/>
            <person name="Fujita M."/>
            <person name="Fujita Y."/>
            <person name="Fuma S."/>
            <person name="Galizzi A."/>
            <person name="Galleron N."/>
            <person name="Ghim S.-Y."/>
            <person name="Glaser P."/>
            <person name="Goffeau A."/>
            <person name="Golightly E.J."/>
            <person name="Grandi G."/>
            <person name="Guiseppi G."/>
            <person name="Guy B.J."/>
            <person name="Haga K."/>
            <person name="Haiech J."/>
            <person name="Harwood C.R."/>
            <person name="Henaut A."/>
            <person name="Hilbert H."/>
            <person name="Holsappel S."/>
            <person name="Hosono S."/>
            <person name="Hullo M.-F."/>
            <person name="Itaya M."/>
            <person name="Jones L.-M."/>
            <person name="Joris B."/>
            <person name="Karamata D."/>
            <person name="Kasahara Y."/>
            <person name="Klaerr-Blanchard M."/>
            <person name="Klein C."/>
            <person name="Kobayashi Y."/>
            <person name="Koetter P."/>
            <person name="Koningstein G."/>
            <person name="Krogh S."/>
            <person name="Kumano M."/>
            <person name="Kurita K."/>
            <person name="Lapidus A."/>
            <person name="Lardinois S."/>
            <person name="Lauber J."/>
            <person name="Lazarevic V."/>
            <person name="Lee S.-M."/>
            <person name="Levine A."/>
            <person name="Liu H."/>
            <person name="Masuda S."/>
            <person name="Mauel C."/>
            <person name="Medigue C."/>
            <person name="Medina N."/>
            <person name="Mellado R.P."/>
            <person name="Mizuno M."/>
            <person name="Moestl D."/>
            <person name="Nakai S."/>
            <person name="Noback M."/>
            <person name="Noone D."/>
            <person name="O'Reilly M."/>
            <person name="Ogawa K."/>
            <person name="Ogiwara A."/>
            <person name="Oudega B."/>
            <person name="Park S.-H."/>
            <person name="Parro V."/>
            <person name="Pohl T.M."/>
            <person name="Portetelle D."/>
            <person name="Porwollik S."/>
            <person name="Prescott A.M."/>
            <person name="Presecan E."/>
            <person name="Pujic P."/>
            <person name="Purnelle B."/>
            <person name="Rapoport G."/>
            <person name="Rey M."/>
            <person name="Reynolds S."/>
            <person name="Rieger M."/>
            <person name="Rivolta C."/>
            <person name="Rocha E."/>
            <person name="Roche B."/>
            <person name="Rose M."/>
            <person name="Sadaie Y."/>
            <person name="Sato T."/>
            <person name="Scanlan E."/>
            <person name="Schleich S."/>
            <person name="Schroeter R."/>
            <person name="Scoffone F."/>
            <person name="Sekiguchi J."/>
            <person name="Sekowska A."/>
            <person name="Seror S.J."/>
            <person name="Serror P."/>
            <person name="Shin B.-S."/>
            <person name="Soldo B."/>
            <person name="Sorokin A."/>
            <person name="Tacconi E."/>
            <person name="Takagi T."/>
            <person name="Takahashi H."/>
            <person name="Takemaru K."/>
            <person name="Takeuchi M."/>
            <person name="Tamakoshi A."/>
            <person name="Tanaka T."/>
            <person name="Terpstra P."/>
            <person name="Tognoni A."/>
            <person name="Tosato V."/>
            <person name="Uchiyama S."/>
            <person name="Vandenbol M."/>
            <person name="Vannier F."/>
            <person name="Vassarotti A."/>
            <person name="Viari A."/>
            <person name="Wambutt R."/>
            <person name="Wedler E."/>
            <person name="Wedler H."/>
            <person name="Weitzenegger T."/>
            <person name="Winters P."/>
            <person name="Wipat A."/>
            <person name="Yamamoto H."/>
            <person name="Yamane K."/>
            <person name="Yasumoto K."/>
            <person name="Yata K."/>
            <person name="Yoshida K."/>
            <person name="Yoshikawa H.-F."/>
            <person name="Zumstein E."/>
            <person name="Yoshikawa H."/>
            <person name="Danchin A."/>
        </authorList>
    </citation>
    <scope>NUCLEOTIDE SEQUENCE [LARGE SCALE GENOMIC DNA]</scope>
    <source>
        <strain>168</strain>
    </source>
</reference>
<reference key="2">
    <citation type="journal article" date="2020" name="Proc. Natl. Acad. Sci. U.S.A.">
        <title>Structure and regulation of the BsYetJ calcium channel in lipid nanodiscs.</title>
        <authorList>
            <person name="Li C.C."/>
            <person name="Kao T.Y."/>
            <person name="Cheng C.C."/>
            <person name="Chiang Y.W."/>
        </authorList>
    </citation>
    <scope>FUNCTION</scope>
    <scope>ACTIVITY REGULATION</scope>
    <scope>SUBCELLULAR LOCATION</scope>
    <scope>DOMAIN</scope>
    <scope>DEER SPECTROSCOPY</scope>
    <scope>MUTAGENESIS OF ASP-171</scope>
</reference>
<reference key="3">
    <citation type="journal article" date="2023" name="Biochim. Biophys. Acta">
        <title>A gating mechanism of the BsYetJ calcium channel revealed in an endoplasmic reticulum lipid environment.</title>
        <authorList>
            <person name="Lan Y.J."/>
            <person name="Cheng C.C."/>
            <person name="Chu S.C."/>
            <person name="Chiang Y.W."/>
        </authorList>
    </citation>
    <scope>FUNCTION</scope>
    <scope>DOMAIN</scope>
    <scope>MUTAGENESIS OF GLU-49</scope>
</reference>
<reference evidence="20" key="4">
    <citation type="journal article" date="2014" name="Acta Crystallogr. D">
        <title>Multi-crystal native SAD analysis at 6keV.</title>
        <authorList>
            <person name="Liu Q."/>
            <person name="Guo Y."/>
            <person name="Chang Y."/>
            <person name="Cai Z."/>
            <person name="Assur Z."/>
            <person name="Mancia F."/>
            <person name="Greene M.I."/>
            <person name="Hendrickson W.A."/>
        </authorList>
    </citation>
    <scope>X-RAY CRYSTALLOGRAPHY (2.80 ANGSTROMS)</scope>
    <scope>SUBUNIT</scope>
    <source>
        <strain>168</strain>
    </source>
</reference>
<reference evidence="15 16 17 18 19" key="5">
    <citation type="journal article" date="2014" name="Science">
        <title>Structural basis for a pH-sensitive calcium leak across membranes.</title>
        <authorList>
            <person name="Chang Y."/>
            <person name="Bruni R."/>
            <person name="Kloss B."/>
            <person name="Assur Z."/>
            <person name="Kloppmann E."/>
            <person name="Rost B."/>
            <person name="Hendrickson W.A."/>
            <person name="Liu Q."/>
        </authorList>
    </citation>
    <scope>X-RAY CRYSTALLOGRAPHY (1.95 ANGSTROMS) IN OPEN AND CLOSED CONFORMATION</scope>
    <scope>FUNCTION</scope>
    <scope>ACTIVITY REGULATION</scope>
    <scope>SUBUNIT</scope>
    <scope>SUBCELLULAR LOCATION</scope>
    <scope>TOPOLOGY</scope>
    <scope>DOMAIN</scope>
</reference>
<reference evidence="21 22 23" key="6">
    <citation type="journal article" date="2019" name="Structure">
        <title>Ion and pH Sensitivity of a TMBIM Ca2+ Channel.</title>
        <authorList>
            <person name="Guo G."/>
            <person name="Xu M."/>
            <person name="Chang Y."/>
            <person name="Luyten T."/>
            <person name="Seitaj B."/>
            <person name="Liu W."/>
            <person name="Zhu P."/>
            <person name="Bultynck G."/>
            <person name="Shi L."/>
            <person name="Quick M."/>
            <person name="Liu Q."/>
        </authorList>
    </citation>
    <scope>X-RAY CRYSTALLOGRAPHY (2.50 ANGSTROMS) OF 6-214 OF WILD-TYPE AND MUTANTS GLU-171 AND GLU-195</scope>
    <scope>FUNCTION</scope>
    <scope>ACTIVITY REGULATION</scope>
    <scope>SUBCELLULAR LOCATION</scope>
    <scope>TOPOLOGY</scope>
    <scope>MUTAGENESIS OF ASP-171 AND ASP-195</scope>
</reference>
<protein>
    <recommendedName>
        <fullName evidence="9">pH-sensitive calcium channel</fullName>
    </recommendedName>
    <alternativeName>
        <fullName evidence="6">BsYetJ</fullName>
    </alternativeName>
    <alternativeName>
        <fullName evidence="7">pH-dependent, voltage-gated calcium channel</fullName>
    </alternativeName>
    <alternativeName>
        <fullName evidence="6">pH-sensitive calcium-leak channel</fullName>
    </alternativeName>
</protein>
<organism>
    <name type="scientific">Bacillus subtilis (strain 168)</name>
    <dbReference type="NCBI Taxonomy" id="224308"/>
    <lineage>
        <taxon>Bacteria</taxon>
        <taxon>Bacillati</taxon>
        <taxon>Bacillota</taxon>
        <taxon>Bacilli</taxon>
        <taxon>Bacillales</taxon>
        <taxon>Bacillaceae</taxon>
        <taxon>Bacillus</taxon>
    </lineage>
</organism>
<accession>O31539</accession>